<protein>
    <recommendedName>
        <fullName>Uncharacterized EAL-domain containing protein YkuI</fullName>
    </recommendedName>
</protein>
<proteinExistence type="evidence at protein level"/>
<accession>O35014</accession>
<accession>Q796K5</accession>
<sequence length="407" mass="47957">MLDPLDILTNIDDVLPYYQAIFSAEEQKVVGYEVLGRILADSEIQSLGPFFLDAGIPEEYKLEVDNRIIRQALDRFLEADSDLLIFMNQDANLLMLDHGESFLELLKEYEAKGIELHRFVLEITEHNFEGDIEQLYHMLAYYRTYGIKIAVDNIGKESSNLDRIALLSPDLLKIDLQALKVSQPSPSYEHVLYSISLLARKIGAALLYEDIEANFQLQYAWRNGGRYFQGYYLVSPSETFLERDVLKQRLKTEFHQFITHEKKKLETVYEHSEQFYKRVHQAVTSLRKNNLSSDDDFIKKLAEELTDCSFRIYMCDEEGDQLTGNVFKQDGEWIYQPEYAEKNWSWRPYFLENIMRMRNLRKGFFSDLYSDLETGEMIRTFSYPMDDQMYLFIDLPYSYLYEQDGLI</sequence>
<feature type="chain" id="PRO_0000359924" description="Uncharacterized EAL-domain containing protein YkuI">
    <location>
        <begin position="1"/>
        <end position="407"/>
    </location>
</feature>
<feature type="domain" description="EAL" evidence="1">
    <location>
        <begin position="1"/>
        <end position="250"/>
    </location>
</feature>
<feature type="helix" evidence="2">
    <location>
        <begin position="4"/>
        <end position="9"/>
    </location>
</feature>
<feature type="turn" evidence="2">
    <location>
        <begin position="10"/>
        <end position="13"/>
    </location>
</feature>
<feature type="strand" evidence="2">
    <location>
        <begin position="14"/>
        <end position="40"/>
    </location>
</feature>
<feature type="strand" evidence="2">
    <location>
        <begin position="43"/>
        <end position="47"/>
    </location>
</feature>
<feature type="helix" evidence="2">
    <location>
        <begin position="48"/>
        <end position="51"/>
    </location>
</feature>
<feature type="strand" evidence="2">
    <location>
        <begin position="54"/>
        <end position="56"/>
    </location>
</feature>
<feature type="helix" evidence="2">
    <location>
        <begin position="58"/>
        <end position="76"/>
    </location>
</feature>
<feature type="strand" evidence="2">
    <location>
        <begin position="84"/>
        <end position="88"/>
    </location>
</feature>
<feature type="helix" evidence="2">
    <location>
        <begin position="91"/>
        <end position="94"/>
    </location>
</feature>
<feature type="helix" evidence="2">
    <location>
        <begin position="95"/>
        <end position="97"/>
    </location>
</feature>
<feature type="helix" evidence="2">
    <location>
        <begin position="100"/>
        <end position="111"/>
    </location>
</feature>
<feature type="helix" evidence="2">
    <location>
        <begin position="116"/>
        <end position="118"/>
    </location>
</feature>
<feature type="strand" evidence="2">
    <location>
        <begin position="119"/>
        <end position="123"/>
    </location>
</feature>
<feature type="helix" evidence="3">
    <location>
        <begin position="125"/>
        <end position="127"/>
    </location>
</feature>
<feature type="helix" evidence="2">
    <location>
        <begin position="132"/>
        <end position="143"/>
    </location>
</feature>
<feature type="turn" evidence="2">
    <location>
        <begin position="144"/>
        <end position="146"/>
    </location>
</feature>
<feature type="strand" evidence="2">
    <location>
        <begin position="148"/>
        <end position="154"/>
    </location>
</feature>
<feature type="turn" evidence="2">
    <location>
        <begin position="155"/>
        <end position="157"/>
    </location>
</feature>
<feature type="helix" evidence="2">
    <location>
        <begin position="161"/>
        <end position="167"/>
    </location>
</feature>
<feature type="strand" evidence="2">
    <location>
        <begin position="170"/>
        <end position="175"/>
    </location>
</feature>
<feature type="turn" evidence="2">
    <location>
        <begin position="177"/>
        <end position="179"/>
    </location>
</feature>
<feature type="helix" evidence="2">
    <location>
        <begin position="187"/>
        <end position="202"/>
    </location>
</feature>
<feature type="strand" evidence="2">
    <location>
        <begin position="205"/>
        <end position="209"/>
    </location>
</feature>
<feature type="helix" evidence="2">
    <location>
        <begin position="214"/>
        <end position="222"/>
    </location>
</feature>
<feature type="strand" evidence="2">
    <location>
        <begin position="225"/>
        <end position="228"/>
    </location>
</feature>
<feature type="turn" evidence="2">
    <location>
        <begin position="231"/>
        <end position="233"/>
    </location>
</feature>
<feature type="strand" evidence="2">
    <location>
        <begin position="237"/>
        <end position="239"/>
    </location>
</feature>
<feature type="turn" evidence="2">
    <location>
        <begin position="243"/>
        <end position="246"/>
    </location>
</feature>
<feature type="helix" evidence="2">
    <location>
        <begin position="247"/>
        <end position="287"/>
    </location>
</feature>
<feature type="helix" evidence="2">
    <location>
        <begin position="294"/>
        <end position="304"/>
    </location>
</feature>
<feature type="helix" evidence="2">
    <location>
        <begin position="306"/>
        <end position="308"/>
    </location>
</feature>
<feature type="strand" evidence="2">
    <location>
        <begin position="310"/>
        <end position="316"/>
    </location>
</feature>
<feature type="strand" evidence="2">
    <location>
        <begin position="319"/>
        <end position="321"/>
    </location>
</feature>
<feature type="strand" evidence="2">
    <location>
        <begin position="325"/>
        <end position="329"/>
    </location>
</feature>
<feature type="strand" evidence="2">
    <location>
        <begin position="332"/>
        <end position="336"/>
    </location>
</feature>
<feature type="helix" evidence="2">
    <location>
        <begin position="337"/>
        <end position="339"/>
    </location>
</feature>
<feature type="helix" evidence="2">
    <location>
        <begin position="350"/>
        <end position="360"/>
    </location>
</feature>
<feature type="turn" evidence="2">
    <location>
        <begin position="372"/>
        <end position="374"/>
    </location>
</feature>
<feature type="strand" evidence="2">
    <location>
        <begin position="376"/>
        <end position="385"/>
    </location>
</feature>
<feature type="turn" evidence="2">
    <location>
        <begin position="386"/>
        <end position="388"/>
    </location>
</feature>
<feature type="strand" evidence="2">
    <location>
        <begin position="389"/>
        <end position="395"/>
    </location>
</feature>
<feature type="helix" evidence="2">
    <location>
        <begin position="397"/>
        <end position="400"/>
    </location>
</feature>
<feature type="strand" evidence="3">
    <location>
        <begin position="403"/>
        <end position="405"/>
    </location>
</feature>
<gene>
    <name type="primary">ykuI</name>
    <name type="ordered locus">BSU14090</name>
</gene>
<keyword id="KW-0002">3D-structure</keyword>
<keyword id="KW-1185">Reference proteome</keyword>
<evidence type="ECO:0000255" key="1">
    <source>
        <dbReference type="PROSITE-ProRule" id="PRU00074"/>
    </source>
</evidence>
<evidence type="ECO:0007829" key="2">
    <source>
        <dbReference type="PDB" id="2BAS"/>
    </source>
</evidence>
<evidence type="ECO:0007829" key="3">
    <source>
        <dbReference type="PDB" id="2W27"/>
    </source>
</evidence>
<dbReference type="EMBL" id="AJ222587">
    <property type="protein sequence ID" value="CAA10872.1"/>
    <property type="molecule type" value="Genomic_DNA"/>
</dbReference>
<dbReference type="EMBL" id="AL009126">
    <property type="protein sequence ID" value="CAB13282.1"/>
    <property type="molecule type" value="Genomic_DNA"/>
</dbReference>
<dbReference type="PIR" id="F69865">
    <property type="entry name" value="F69865"/>
</dbReference>
<dbReference type="RefSeq" id="NP_389292.1">
    <property type="nucleotide sequence ID" value="NC_000964.3"/>
</dbReference>
<dbReference type="RefSeq" id="WP_003232391.1">
    <property type="nucleotide sequence ID" value="NZ_OZ025638.1"/>
</dbReference>
<dbReference type="PDB" id="2BAS">
    <property type="method" value="X-ray"/>
    <property type="resolution" value="2.61 A"/>
    <property type="chains" value="A/B=1-407"/>
</dbReference>
<dbReference type="PDB" id="2W27">
    <property type="method" value="X-ray"/>
    <property type="resolution" value="2.80 A"/>
    <property type="chains" value="A/B=1-407"/>
</dbReference>
<dbReference type="PDBsum" id="2BAS"/>
<dbReference type="PDBsum" id="2W27"/>
<dbReference type="SMR" id="O35014"/>
<dbReference type="FunCoup" id="O35014">
    <property type="interactions" value="47"/>
</dbReference>
<dbReference type="STRING" id="224308.BSU14090"/>
<dbReference type="PaxDb" id="224308-BSU14090"/>
<dbReference type="EnsemblBacteria" id="CAB13282">
    <property type="protein sequence ID" value="CAB13282"/>
    <property type="gene ID" value="BSU_14090"/>
</dbReference>
<dbReference type="GeneID" id="939207"/>
<dbReference type="KEGG" id="bsu:BSU14090"/>
<dbReference type="PATRIC" id="fig|224308.179.peg.1537"/>
<dbReference type="eggNOG" id="COG2200">
    <property type="taxonomic scope" value="Bacteria"/>
</dbReference>
<dbReference type="InParanoid" id="O35014"/>
<dbReference type="OrthoDB" id="1673646at2"/>
<dbReference type="PhylomeDB" id="O35014"/>
<dbReference type="BioCyc" id="BSUB:BSU14090-MONOMER"/>
<dbReference type="EvolutionaryTrace" id="O35014"/>
<dbReference type="Proteomes" id="UP000001570">
    <property type="component" value="Chromosome"/>
</dbReference>
<dbReference type="GO" id="GO:0005886">
    <property type="term" value="C:plasma membrane"/>
    <property type="evidence" value="ECO:0000318"/>
    <property type="project" value="GO_Central"/>
</dbReference>
<dbReference type="GO" id="GO:0071111">
    <property type="term" value="F:cyclic-guanylate-specific phosphodiesterase activity"/>
    <property type="evidence" value="ECO:0000318"/>
    <property type="project" value="GO_Central"/>
</dbReference>
<dbReference type="CDD" id="cd01948">
    <property type="entry name" value="EAL"/>
    <property type="match status" value="1"/>
</dbReference>
<dbReference type="Gene3D" id="1.20.5.170">
    <property type="match status" value="1"/>
</dbReference>
<dbReference type="Gene3D" id="3.20.20.450">
    <property type="entry name" value="EAL domain"/>
    <property type="match status" value="1"/>
</dbReference>
<dbReference type="Gene3D" id="3.30.450.20">
    <property type="entry name" value="PAS domain"/>
    <property type="match status" value="1"/>
</dbReference>
<dbReference type="InterPro" id="IPR050706">
    <property type="entry name" value="Cyclic-di-GMP_PDE-like"/>
</dbReference>
<dbReference type="InterPro" id="IPR001633">
    <property type="entry name" value="EAL_dom"/>
</dbReference>
<dbReference type="InterPro" id="IPR035919">
    <property type="entry name" value="EAL_sf"/>
</dbReference>
<dbReference type="InterPro" id="IPR029151">
    <property type="entry name" value="Sensor-like_sf"/>
</dbReference>
<dbReference type="InterPro" id="IPR018842">
    <property type="entry name" value="YkuI_C"/>
</dbReference>
<dbReference type="PANTHER" id="PTHR33121">
    <property type="entry name" value="CYCLIC DI-GMP PHOSPHODIESTERASE PDEF"/>
    <property type="match status" value="1"/>
</dbReference>
<dbReference type="PANTHER" id="PTHR33121:SF82">
    <property type="entry name" value="SIGNAL TRANSDUCTION PROTEIN CONTAINING A EAL DOMAIN"/>
    <property type="match status" value="1"/>
</dbReference>
<dbReference type="Pfam" id="PF00563">
    <property type="entry name" value="EAL"/>
    <property type="match status" value="1"/>
</dbReference>
<dbReference type="Pfam" id="PF10388">
    <property type="entry name" value="YkuI_C"/>
    <property type="match status" value="1"/>
</dbReference>
<dbReference type="SMART" id="SM00052">
    <property type="entry name" value="EAL"/>
    <property type="match status" value="1"/>
</dbReference>
<dbReference type="SUPFAM" id="SSF141868">
    <property type="entry name" value="EAL domain-like"/>
    <property type="match status" value="1"/>
</dbReference>
<dbReference type="SUPFAM" id="SSF103190">
    <property type="entry name" value="Sensory domain-like"/>
    <property type="match status" value="1"/>
</dbReference>
<dbReference type="PROSITE" id="PS50883">
    <property type="entry name" value="EAL"/>
    <property type="match status" value="1"/>
</dbReference>
<reference key="1">
    <citation type="submission" date="1997-11" db="EMBL/GenBank/DDBJ databases">
        <title>Sequence of the Bacillus subtilis chromosome from ykuA to cse-15.</title>
        <authorList>
            <person name="Scanlan E."/>
            <person name="Devine K.M."/>
        </authorList>
    </citation>
    <scope>NUCLEOTIDE SEQUENCE [GENOMIC DNA]</scope>
    <source>
        <strain>168</strain>
    </source>
</reference>
<reference key="2">
    <citation type="journal article" date="1997" name="Nature">
        <title>The complete genome sequence of the Gram-positive bacterium Bacillus subtilis.</title>
        <authorList>
            <person name="Kunst F."/>
            <person name="Ogasawara N."/>
            <person name="Moszer I."/>
            <person name="Albertini A.M."/>
            <person name="Alloni G."/>
            <person name="Azevedo V."/>
            <person name="Bertero M.G."/>
            <person name="Bessieres P."/>
            <person name="Bolotin A."/>
            <person name="Borchert S."/>
            <person name="Borriss R."/>
            <person name="Boursier L."/>
            <person name="Brans A."/>
            <person name="Braun M."/>
            <person name="Brignell S.C."/>
            <person name="Bron S."/>
            <person name="Brouillet S."/>
            <person name="Bruschi C.V."/>
            <person name="Caldwell B."/>
            <person name="Capuano V."/>
            <person name="Carter N.M."/>
            <person name="Choi S.-K."/>
            <person name="Codani J.-J."/>
            <person name="Connerton I.F."/>
            <person name="Cummings N.J."/>
            <person name="Daniel R.A."/>
            <person name="Denizot F."/>
            <person name="Devine K.M."/>
            <person name="Duesterhoeft A."/>
            <person name="Ehrlich S.D."/>
            <person name="Emmerson P.T."/>
            <person name="Entian K.-D."/>
            <person name="Errington J."/>
            <person name="Fabret C."/>
            <person name="Ferrari E."/>
            <person name="Foulger D."/>
            <person name="Fritz C."/>
            <person name="Fujita M."/>
            <person name="Fujita Y."/>
            <person name="Fuma S."/>
            <person name="Galizzi A."/>
            <person name="Galleron N."/>
            <person name="Ghim S.-Y."/>
            <person name="Glaser P."/>
            <person name="Goffeau A."/>
            <person name="Golightly E.J."/>
            <person name="Grandi G."/>
            <person name="Guiseppi G."/>
            <person name="Guy B.J."/>
            <person name="Haga K."/>
            <person name="Haiech J."/>
            <person name="Harwood C.R."/>
            <person name="Henaut A."/>
            <person name="Hilbert H."/>
            <person name="Holsappel S."/>
            <person name="Hosono S."/>
            <person name="Hullo M.-F."/>
            <person name="Itaya M."/>
            <person name="Jones L.-M."/>
            <person name="Joris B."/>
            <person name="Karamata D."/>
            <person name="Kasahara Y."/>
            <person name="Klaerr-Blanchard M."/>
            <person name="Klein C."/>
            <person name="Kobayashi Y."/>
            <person name="Koetter P."/>
            <person name="Koningstein G."/>
            <person name="Krogh S."/>
            <person name="Kumano M."/>
            <person name="Kurita K."/>
            <person name="Lapidus A."/>
            <person name="Lardinois S."/>
            <person name="Lauber J."/>
            <person name="Lazarevic V."/>
            <person name="Lee S.-M."/>
            <person name="Levine A."/>
            <person name="Liu H."/>
            <person name="Masuda S."/>
            <person name="Mauel C."/>
            <person name="Medigue C."/>
            <person name="Medina N."/>
            <person name="Mellado R.P."/>
            <person name="Mizuno M."/>
            <person name="Moestl D."/>
            <person name="Nakai S."/>
            <person name="Noback M."/>
            <person name="Noone D."/>
            <person name="O'Reilly M."/>
            <person name="Ogawa K."/>
            <person name="Ogiwara A."/>
            <person name="Oudega B."/>
            <person name="Park S.-H."/>
            <person name="Parro V."/>
            <person name="Pohl T.M."/>
            <person name="Portetelle D."/>
            <person name="Porwollik S."/>
            <person name="Prescott A.M."/>
            <person name="Presecan E."/>
            <person name="Pujic P."/>
            <person name="Purnelle B."/>
            <person name="Rapoport G."/>
            <person name="Rey M."/>
            <person name="Reynolds S."/>
            <person name="Rieger M."/>
            <person name="Rivolta C."/>
            <person name="Rocha E."/>
            <person name="Roche B."/>
            <person name="Rose M."/>
            <person name="Sadaie Y."/>
            <person name="Sato T."/>
            <person name="Scanlan E."/>
            <person name="Schleich S."/>
            <person name="Schroeter R."/>
            <person name="Scoffone F."/>
            <person name="Sekiguchi J."/>
            <person name="Sekowska A."/>
            <person name="Seror S.J."/>
            <person name="Serror P."/>
            <person name="Shin B.-S."/>
            <person name="Soldo B."/>
            <person name="Sorokin A."/>
            <person name="Tacconi E."/>
            <person name="Takagi T."/>
            <person name="Takahashi H."/>
            <person name="Takemaru K."/>
            <person name="Takeuchi M."/>
            <person name="Tamakoshi A."/>
            <person name="Tanaka T."/>
            <person name="Terpstra P."/>
            <person name="Tognoni A."/>
            <person name="Tosato V."/>
            <person name="Uchiyama S."/>
            <person name="Vandenbol M."/>
            <person name="Vannier F."/>
            <person name="Vassarotti A."/>
            <person name="Viari A."/>
            <person name="Wambutt R."/>
            <person name="Wedler E."/>
            <person name="Wedler H."/>
            <person name="Weitzenegger T."/>
            <person name="Winters P."/>
            <person name="Wipat A."/>
            <person name="Yamamoto H."/>
            <person name="Yamane K."/>
            <person name="Yasumoto K."/>
            <person name="Yata K."/>
            <person name="Yoshida K."/>
            <person name="Yoshikawa H.-F."/>
            <person name="Zumstein E."/>
            <person name="Yoshikawa H."/>
            <person name="Danchin A."/>
        </authorList>
    </citation>
    <scope>NUCLEOTIDE SEQUENCE [LARGE SCALE GENOMIC DNA]</scope>
    <source>
        <strain>168</strain>
    </source>
</reference>
<reference key="3">
    <citation type="submission" date="2005-11" db="PDB data bank">
        <title>Crystal structure of the Bacillus subtilis ykuI protein, with an EAL domain.</title>
        <authorList>
            <consortium name="Midwest center for structural genomics (MCSG)"/>
        </authorList>
    </citation>
    <scope>X-RAY CRYSTALLOGRAPHY (2.61 ANGSTROMS)</scope>
</reference>
<organism>
    <name type="scientific">Bacillus subtilis (strain 168)</name>
    <dbReference type="NCBI Taxonomy" id="224308"/>
    <lineage>
        <taxon>Bacteria</taxon>
        <taxon>Bacillati</taxon>
        <taxon>Bacillota</taxon>
        <taxon>Bacilli</taxon>
        <taxon>Bacillales</taxon>
        <taxon>Bacillaceae</taxon>
        <taxon>Bacillus</taxon>
    </lineage>
</organism>
<name>YKUI_BACSU</name>